<evidence type="ECO:0000255" key="1">
    <source>
        <dbReference type="HAMAP-Rule" id="MF_01346"/>
    </source>
</evidence>
<gene>
    <name evidence="1" type="primary">atpA2</name>
    <name type="ordered locus">HCH_07073</name>
</gene>
<keyword id="KW-0066">ATP synthesis</keyword>
<keyword id="KW-0067">ATP-binding</keyword>
<keyword id="KW-0997">Cell inner membrane</keyword>
<keyword id="KW-1003">Cell membrane</keyword>
<keyword id="KW-0139">CF(1)</keyword>
<keyword id="KW-0375">Hydrogen ion transport</keyword>
<keyword id="KW-0406">Ion transport</keyword>
<keyword id="KW-0472">Membrane</keyword>
<keyword id="KW-0547">Nucleotide-binding</keyword>
<keyword id="KW-1185">Reference proteome</keyword>
<keyword id="KW-1278">Translocase</keyword>
<keyword id="KW-0813">Transport</keyword>
<accession>Q2S6N9</accession>
<proteinExistence type="inferred from homology"/>
<protein>
    <recommendedName>
        <fullName evidence="1">ATP synthase subunit alpha 2</fullName>
        <ecNumber evidence="1">7.1.2.2</ecNumber>
    </recommendedName>
    <alternativeName>
        <fullName evidence="1">ATP synthase F1 sector subunit alpha 2</fullName>
    </alternativeName>
    <alternativeName>
        <fullName evidence="1">F-ATPase subunit alpha 2</fullName>
    </alternativeName>
</protein>
<feature type="chain" id="PRO_0000238262" description="ATP synthase subunit alpha 2">
    <location>
        <begin position="1"/>
        <end position="514"/>
    </location>
</feature>
<feature type="binding site" evidence="1">
    <location>
        <begin position="170"/>
        <end position="177"/>
    </location>
    <ligand>
        <name>ATP</name>
        <dbReference type="ChEBI" id="CHEBI:30616"/>
    </ligand>
</feature>
<feature type="site" description="Required for activity" evidence="1">
    <location>
        <position position="374"/>
    </location>
</feature>
<dbReference type="EC" id="7.1.2.2" evidence="1"/>
<dbReference type="EMBL" id="CP000155">
    <property type="protein sequence ID" value="ABC33685.1"/>
    <property type="molecule type" value="Genomic_DNA"/>
</dbReference>
<dbReference type="SMR" id="Q2S6N9"/>
<dbReference type="STRING" id="349521.HCH_07073"/>
<dbReference type="KEGG" id="hch:HCH_07073"/>
<dbReference type="eggNOG" id="COG0056">
    <property type="taxonomic scope" value="Bacteria"/>
</dbReference>
<dbReference type="HOGENOM" id="CLU_010091_2_1_6"/>
<dbReference type="OrthoDB" id="9803053at2"/>
<dbReference type="Proteomes" id="UP000000238">
    <property type="component" value="Chromosome"/>
</dbReference>
<dbReference type="GO" id="GO:0005886">
    <property type="term" value="C:plasma membrane"/>
    <property type="evidence" value="ECO:0007669"/>
    <property type="project" value="UniProtKB-SubCell"/>
</dbReference>
<dbReference type="GO" id="GO:0045259">
    <property type="term" value="C:proton-transporting ATP synthase complex"/>
    <property type="evidence" value="ECO:0007669"/>
    <property type="project" value="UniProtKB-KW"/>
</dbReference>
<dbReference type="GO" id="GO:0043531">
    <property type="term" value="F:ADP binding"/>
    <property type="evidence" value="ECO:0007669"/>
    <property type="project" value="TreeGrafter"/>
</dbReference>
<dbReference type="GO" id="GO:0005524">
    <property type="term" value="F:ATP binding"/>
    <property type="evidence" value="ECO:0007669"/>
    <property type="project" value="UniProtKB-UniRule"/>
</dbReference>
<dbReference type="GO" id="GO:0046933">
    <property type="term" value="F:proton-transporting ATP synthase activity, rotational mechanism"/>
    <property type="evidence" value="ECO:0007669"/>
    <property type="project" value="UniProtKB-UniRule"/>
</dbReference>
<dbReference type="CDD" id="cd18113">
    <property type="entry name" value="ATP-synt_F1_alpha_C"/>
    <property type="match status" value="1"/>
</dbReference>
<dbReference type="CDD" id="cd18116">
    <property type="entry name" value="ATP-synt_F1_alpha_N"/>
    <property type="match status" value="1"/>
</dbReference>
<dbReference type="CDD" id="cd01132">
    <property type="entry name" value="F1-ATPase_alpha_CD"/>
    <property type="match status" value="1"/>
</dbReference>
<dbReference type="FunFam" id="1.20.150.20:FF:000001">
    <property type="entry name" value="ATP synthase subunit alpha"/>
    <property type="match status" value="1"/>
</dbReference>
<dbReference type="FunFam" id="2.40.30.20:FF:000001">
    <property type="entry name" value="ATP synthase subunit alpha"/>
    <property type="match status" value="1"/>
</dbReference>
<dbReference type="FunFam" id="3.40.50.300:FF:000002">
    <property type="entry name" value="ATP synthase subunit alpha"/>
    <property type="match status" value="1"/>
</dbReference>
<dbReference type="Gene3D" id="2.40.30.20">
    <property type="match status" value="1"/>
</dbReference>
<dbReference type="Gene3D" id="1.20.150.20">
    <property type="entry name" value="ATP synthase alpha/beta chain, C-terminal domain"/>
    <property type="match status" value="1"/>
</dbReference>
<dbReference type="Gene3D" id="3.40.50.300">
    <property type="entry name" value="P-loop containing nucleotide triphosphate hydrolases"/>
    <property type="match status" value="1"/>
</dbReference>
<dbReference type="HAMAP" id="MF_01346">
    <property type="entry name" value="ATP_synth_alpha_bact"/>
    <property type="match status" value="1"/>
</dbReference>
<dbReference type="InterPro" id="IPR023366">
    <property type="entry name" value="ATP_synth_asu-like_sf"/>
</dbReference>
<dbReference type="InterPro" id="IPR000793">
    <property type="entry name" value="ATP_synth_asu_C"/>
</dbReference>
<dbReference type="InterPro" id="IPR038376">
    <property type="entry name" value="ATP_synth_asu_C_sf"/>
</dbReference>
<dbReference type="InterPro" id="IPR033732">
    <property type="entry name" value="ATP_synth_F1_a_nt-bd_dom"/>
</dbReference>
<dbReference type="InterPro" id="IPR005294">
    <property type="entry name" value="ATP_synth_F1_asu"/>
</dbReference>
<dbReference type="InterPro" id="IPR004100">
    <property type="entry name" value="ATPase_F1/V1/A1_a/bsu_N"/>
</dbReference>
<dbReference type="InterPro" id="IPR036121">
    <property type="entry name" value="ATPase_F1/V1/A1_a/bsu_N_sf"/>
</dbReference>
<dbReference type="InterPro" id="IPR000194">
    <property type="entry name" value="ATPase_F1/V1/A1_a/bsu_nucl-bd"/>
</dbReference>
<dbReference type="InterPro" id="IPR027417">
    <property type="entry name" value="P-loop_NTPase"/>
</dbReference>
<dbReference type="NCBIfam" id="TIGR00962">
    <property type="entry name" value="atpA"/>
    <property type="match status" value="1"/>
</dbReference>
<dbReference type="NCBIfam" id="NF009884">
    <property type="entry name" value="PRK13343.1"/>
    <property type="match status" value="1"/>
</dbReference>
<dbReference type="PANTHER" id="PTHR48082">
    <property type="entry name" value="ATP SYNTHASE SUBUNIT ALPHA, MITOCHONDRIAL"/>
    <property type="match status" value="1"/>
</dbReference>
<dbReference type="PANTHER" id="PTHR48082:SF2">
    <property type="entry name" value="ATP SYNTHASE SUBUNIT ALPHA, MITOCHONDRIAL"/>
    <property type="match status" value="1"/>
</dbReference>
<dbReference type="Pfam" id="PF00006">
    <property type="entry name" value="ATP-synt_ab"/>
    <property type="match status" value="1"/>
</dbReference>
<dbReference type="Pfam" id="PF00306">
    <property type="entry name" value="ATP-synt_ab_C"/>
    <property type="match status" value="1"/>
</dbReference>
<dbReference type="Pfam" id="PF02874">
    <property type="entry name" value="ATP-synt_ab_N"/>
    <property type="match status" value="1"/>
</dbReference>
<dbReference type="PIRSF" id="PIRSF039088">
    <property type="entry name" value="F_ATPase_subunit_alpha"/>
    <property type="match status" value="1"/>
</dbReference>
<dbReference type="SUPFAM" id="SSF47917">
    <property type="entry name" value="C-terminal domain of alpha and beta subunits of F1 ATP synthase"/>
    <property type="match status" value="1"/>
</dbReference>
<dbReference type="SUPFAM" id="SSF50615">
    <property type="entry name" value="N-terminal domain of alpha and beta subunits of F1 ATP synthase"/>
    <property type="match status" value="1"/>
</dbReference>
<dbReference type="SUPFAM" id="SSF52540">
    <property type="entry name" value="P-loop containing nucleoside triphosphate hydrolases"/>
    <property type="match status" value="1"/>
</dbReference>
<reference key="1">
    <citation type="journal article" date="2005" name="Nucleic Acids Res.">
        <title>Genomic blueprint of Hahella chejuensis, a marine microbe producing an algicidal agent.</title>
        <authorList>
            <person name="Jeong H."/>
            <person name="Yim J.H."/>
            <person name="Lee C."/>
            <person name="Choi S.-H."/>
            <person name="Park Y.K."/>
            <person name="Yoon S.H."/>
            <person name="Hur C.-G."/>
            <person name="Kang H.-Y."/>
            <person name="Kim D."/>
            <person name="Lee H.H."/>
            <person name="Park K.H."/>
            <person name="Park S.-H."/>
            <person name="Park H.-S."/>
            <person name="Lee H.K."/>
            <person name="Oh T.K."/>
            <person name="Kim J.F."/>
        </authorList>
    </citation>
    <scope>NUCLEOTIDE SEQUENCE [LARGE SCALE GENOMIC DNA]</scope>
    <source>
        <strain>KCTC 2396</strain>
    </source>
</reference>
<sequence length="514" mass="55584">MQQLNPSEISEIIKKRIEKLDISSEAKTEGTIVSVSDGIVLIHGLADVMYGEMIEFEGGVYGLALNLERDSVGAVVLGDYKDLAEGQKVRVTGRILEVPVGEQLLGRVVDGLGNPIDGKGALETTLTEPVEKVAPGVIARKSVGQPMQTGYKSVDTMVPIGRGQRELVIGDRQTGKTALAIDAIINQKGTGIKCIYVAIGQKQSSIANVVRKLEEHGAMDHTIVVAAGAADPASMQFLAPYSGCTMGEYFRDRGEDALIIYDDLTKQAWAYRQISLLLRRPPGREAYPGDVFYLHSRLLERASRVNEEYVEKYTNGEVKGKTGSLTALPIIETQAGDVSAFVPTNVISITDGQIFLETSLFNAGIRPAMNAGISVSRVGGAAQTKIMKKLGGGIRLALAQYRELAAFAQFASDLDEATRKQLEHGQRVTELMKQKQFAPMTVAEMGLVLFAANEGFLDDVDAKKVVPFEAALLSYAKSEFGDLLAKINEAGDYNDEIAAGLKSCIEKFKSTQTW</sequence>
<organism>
    <name type="scientific">Hahella chejuensis (strain KCTC 2396)</name>
    <dbReference type="NCBI Taxonomy" id="349521"/>
    <lineage>
        <taxon>Bacteria</taxon>
        <taxon>Pseudomonadati</taxon>
        <taxon>Pseudomonadota</taxon>
        <taxon>Gammaproteobacteria</taxon>
        <taxon>Oceanospirillales</taxon>
        <taxon>Hahellaceae</taxon>
        <taxon>Hahella</taxon>
    </lineage>
</organism>
<comment type="function">
    <text evidence="1">Produces ATP from ADP in the presence of a proton gradient across the membrane. The alpha chain is a regulatory subunit.</text>
</comment>
<comment type="catalytic activity">
    <reaction evidence="1">
        <text>ATP + H2O + 4 H(+)(in) = ADP + phosphate + 5 H(+)(out)</text>
        <dbReference type="Rhea" id="RHEA:57720"/>
        <dbReference type="ChEBI" id="CHEBI:15377"/>
        <dbReference type="ChEBI" id="CHEBI:15378"/>
        <dbReference type="ChEBI" id="CHEBI:30616"/>
        <dbReference type="ChEBI" id="CHEBI:43474"/>
        <dbReference type="ChEBI" id="CHEBI:456216"/>
        <dbReference type="EC" id="7.1.2.2"/>
    </reaction>
</comment>
<comment type="subunit">
    <text evidence="1">F-type ATPases have 2 components, CF(1) - the catalytic core - and CF(0) - the membrane proton channel. CF(1) has five subunits: alpha(3), beta(3), gamma(1), delta(1), epsilon(1). CF(0) has three main subunits: a(1), b(2) and c(9-12). The alpha and beta chains form an alternating ring which encloses part of the gamma chain. CF(1) is attached to CF(0) by a central stalk formed by the gamma and epsilon chains, while a peripheral stalk is formed by the delta and b chains.</text>
</comment>
<comment type="subcellular location">
    <subcellularLocation>
        <location evidence="1">Cell inner membrane</location>
        <topology evidence="1">Peripheral membrane protein</topology>
    </subcellularLocation>
</comment>
<comment type="similarity">
    <text evidence="1">Belongs to the ATPase alpha/beta chains family.</text>
</comment>
<name>ATPA2_HAHCH</name>